<reference key="1">
    <citation type="journal article" date="2005" name="Proc. Natl. Acad. Sci. U.S.A.">
        <title>Complete genome sequence of Vibrio fischeri: a symbiotic bacterium with pathogenic congeners.</title>
        <authorList>
            <person name="Ruby E.G."/>
            <person name="Urbanowski M."/>
            <person name="Campbell J."/>
            <person name="Dunn A."/>
            <person name="Faini M."/>
            <person name="Gunsalus R."/>
            <person name="Lostroh P."/>
            <person name="Lupp C."/>
            <person name="McCann J."/>
            <person name="Millikan D."/>
            <person name="Schaefer A."/>
            <person name="Stabb E."/>
            <person name="Stevens A."/>
            <person name="Visick K."/>
            <person name="Whistler C."/>
            <person name="Greenberg E.P."/>
        </authorList>
    </citation>
    <scope>NUCLEOTIDE SEQUENCE [LARGE SCALE GENOMIC DNA]</scope>
    <source>
        <strain>ATCC 700601 / ES114</strain>
    </source>
</reference>
<proteinExistence type="inferred from homology"/>
<accession>Q5E1W7</accession>
<sequence length="276" mass="30551">MHFHFSKMHGLGNDFMVVDCLTQNIFFSPDLIRRLADRHRGIGFDQLLVVEAPYDPETDFHYRIFNADGSEVEQCGNGARCFARFVRMKGLTNKTSISVSTKKGKMILKVEDDDQITVNMGEPVFEPNKIPFKATQAEKTYLLRVDDKTLFSGAVSMGNPHCVTVVDDVDAYDVDKYGQLVESHERFPERVNAGFMQIISPNEVKLRVYERGAGETQACGSGACGAVAVGIMQELLGEEVKVSLPGGDLHIVWQGPGKPLFMTGPATHVYDGQLSI</sequence>
<comment type="function">
    <text evidence="1">Catalyzes the stereoinversion of LL-2,6-diaminopimelate (L,L-DAP) to meso-diaminopimelate (meso-DAP), a precursor of L-lysine and an essential component of the bacterial peptidoglycan.</text>
</comment>
<comment type="catalytic activity">
    <reaction evidence="1">
        <text>(2S,6S)-2,6-diaminopimelate = meso-2,6-diaminopimelate</text>
        <dbReference type="Rhea" id="RHEA:15393"/>
        <dbReference type="ChEBI" id="CHEBI:57609"/>
        <dbReference type="ChEBI" id="CHEBI:57791"/>
        <dbReference type="EC" id="5.1.1.7"/>
    </reaction>
</comment>
<comment type="pathway">
    <text evidence="1">Amino-acid biosynthesis; L-lysine biosynthesis via DAP pathway; DL-2,6-diaminopimelate from LL-2,6-diaminopimelate: step 1/1.</text>
</comment>
<comment type="subunit">
    <text evidence="1">Homodimer.</text>
</comment>
<comment type="subcellular location">
    <subcellularLocation>
        <location evidence="1">Cytoplasm</location>
    </subcellularLocation>
</comment>
<comment type="similarity">
    <text evidence="1">Belongs to the diaminopimelate epimerase family.</text>
</comment>
<keyword id="KW-0028">Amino-acid biosynthesis</keyword>
<keyword id="KW-0963">Cytoplasm</keyword>
<keyword id="KW-0413">Isomerase</keyword>
<keyword id="KW-0457">Lysine biosynthesis</keyword>
<keyword id="KW-1185">Reference proteome</keyword>
<feature type="chain" id="PRO_1000011981" description="Diaminopimelate epimerase">
    <location>
        <begin position="1"/>
        <end position="276"/>
    </location>
</feature>
<feature type="active site" description="Proton donor" evidence="1">
    <location>
        <position position="75"/>
    </location>
</feature>
<feature type="active site" description="Proton acceptor" evidence="1">
    <location>
        <position position="219"/>
    </location>
</feature>
<feature type="binding site" evidence="1">
    <location>
        <position position="13"/>
    </location>
    <ligand>
        <name>substrate</name>
    </ligand>
</feature>
<feature type="binding site" evidence="1">
    <location>
        <position position="46"/>
    </location>
    <ligand>
        <name>substrate</name>
    </ligand>
</feature>
<feature type="binding site" evidence="1">
    <location>
        <position position="66"/>
    </location>
    <ligand>
        <name>substrate</name>
    </ligand>
</feature>
<feature type="binding site" evidence="1">
    <location>
        <begin position="76"/>
        <end position="77"/>
    </location>
    <ligand>
        <name>substrate</name>
    </ligand>
</feature>
<feature type="binding site" evidence="1">
    <location>
        <position position="159"/>
    </location>
    <ligand>
        <name>substrate</name>
    </ligand>
</feature>
<feature type="binding site" evidence="1">
    <location>
        <position position="192"/>
    </location>
    <ligand>
        <name>substrate</name>
    </ligand>
</feature>
<feature type="binding site" evidence="1">
    <location>
        <begin position="210"/>
        <end position="211"/>
    </location>
    <ligand>
        <name>substrate</name>
    </ligand>
</feature>
<feature type="binding site" evidence="1">
    <location>
        <begin position="220"/>
        <end position="221"/>
    </location>
    <ligand>
        <name>substrate</name>
    </ligand>
</feature>
<feature type="site" description="Could be important to modulate the pK values of the two catalytic cysteine residues" evidence="1">
    <location>
        <position position="161"/>
    </location>
</feature>
<feature type="site" description="Could be important to modulate the pK values of the two catalytic cysteine residues" evidence="1">
    <location>
        <position position="210"/>
    </location>
</feature>
<feature type="site" description="Important for dimerization" evidence="1">
    <location>
        <position position="270"/>
    </location>
</feature>
<organism>
    <name type="scientific">Aliivibrio fischeri (strain ATCC 700601 / ES114)</name>
    <name type="common">Vibrio fischeri</name>
    <dbReference type="NCBI Taxonomy" id="312309"/>
    <lineage>
        <taxon>Bacteria</taxon>
        <taxon>Pseudomonadati</taxon>
        <taxon>Pseudomonadota</taxon>
        <taxon>Gammaproteobacteria</taxon>
        <taxon>Vibrionales</taxon>
        <taxon>Vibrionaceae</taxon>
        <taxon>Aliivibrio</taxon>
    </lineage>
</organism>
<evidence type="ECO:0000255" key="1">
    <source>
        <dbReference type="HAMAP-Rule" id="MF_00197"/>
    </source>
</evidence>
<protein>
    <recommendedName>
        <fullName evidence="1">Diaminopimelate epimerase</fullName>
        <shortName evidence="1">DAP epimerase</shortName>
        <ecNumber evidence="1">5.1.1.7</ecNumber>
    </recommendedName>
    <alternativeName>
        <fullName evidence="1">PLP-independent amino acid racemase</fullName>
    </alternativeName>
</protein>
<gene>
    <name evidence="1" type="primary">dapF</name>
    <name type="ordered locus">VF_2484</name>
</gene>
<name>DAPF_ALIF1</name>
<dbReference type="EC" id="5.1.1.7" evidence="1"/>
<dbReference type="EMBL" id="CP000020">
    <property type="protein sequence ID" value="AAW86979.1"/>
    <property type="molecule type" value="Genomic_DNA"/>
</dbReference>
<dbReference type="RefSeq" id="WP_011262841.1">
    <property type="nucleotide sequence ID" value="NC_006840.2"/>
</dbReference>
<dbReference type="RefSeq" id="YP_205867.1">
    <property type="nucleotide sequence ID" value="NC_006840.2"/>
</dbReference>
<dbReference type="SMR" id="Q5E1W7"/>
<dbReference type="STRING" id="312309.VF_2484"/>
<dbReference type="EnsemblBacteria" id="AAW86979">
    <property type="protein sequence ID" value="AAW86979"/>
    <property type="gene ID" value="VF_2484"/>
</dbReference>
<dbReference type="GeneID" id="54165215"/>
<dbReference type="KEGG" id="vfi:VF_2484"/>
<dbReference type="PATRIC" id="fig|312309.11.peg.2512"/>
<dbReference type="eggNOG" id="COG0253">
    <property type="taxonomic scope" value="Bacteria"/>
</dbReference>
<dbReference type="HOGENOM" id="CLU_053306_1_1_6"/>
<dbReference type="OrthoDB" id="9805408at2"/>
<dbReference type="UniPathway" id="UPA00034">
    <property type="reaction ID" value="UER00025"/>
</dbReference>
<dbReference type="Proteomes" id="UP000000537">
    <property type="component" value="Chromosome I"/>
</dbReference>
<dbReference type="GO" id="GO:0005829">
    <property type="term" value="C:cytosol"/>
    <property type="evidence" value="ECO:0007669"/>
    <property type="project" value="TreeGrafter"/>
</dbReference>
<dbReference type="GO" id="GO:0008837">
    <property type="term" value="F:diaminopimelate epimerase activity"/>
    <property type="evidence" value="ECO:0007669"/>
    <property type="project" value="UniProtKB-UniRule"/>
</dbReference>
<dbReference type="GO" id="GO:0009089">
    <property type="term" value="P:lysine biosynthetic process via diaminopimelate"/>
    <property type="evidence" value="ECO:0007669"/>
    <property type="project" value="UniProtKB-UniRule"/>
</dbReference>
<dbReference type="FunFam" id="3.10.310.10:FF:000001">
    <property type="entry name" value="Diaminopimelate epimerase"/>
    <property type="match status" value="1"/>
</dbReference>
<dbReference type="FunFam" id="3.10.310.10:FF:000002">
    <property type="entry name" value="Diaminopimelate epimerase"/>
    <property type="match status" value="1"/>
</dbReference>
<dbReference type="Gene3D" id="3.10.310.10">
    <property type="entry name" value="Diaminopimelate Epimerase, Chain A, domain 1"/>
    <property type="match status" value="2"/>
</dbReference>
<dbReference type="HAMAP" id="MF_00197">
    <property type="entry name" value="DAP_epimerase"/>
    <property type="match status" value="1"/>
</dbReference>
<dbReference type="InterPro" id="IPR018510">
    <property type="entry name" value="DAP_epimerase_AS"/>
</dbReference>
<dbReference type="InterPro" id="IPR001653">
    <property type="entry name" value="DAP_epimerase_DapF"/>
</dbReference>
<dbReference type="NCBIfam" id="TIGR00652">
    <property type="entry name" value="DapF"/>
    <property type="match status" value="1"/>
</dbReference>
<dbReference type="PANTHER" id="PTHR31689:SF0">
    <property type="entry name" value="DIAMINOPIMELATE EPIMERASE"/>
    <property type="match status" value="1"/>
</dbReference>
<dbReference type="PANTHER" id="PTHR31689">
    <property type="entry name" value="DIAMINOPIMELATE EPIMERASE, CHLOROPLASTIC"/>
    <property type="match status" value="1"/>
</dbReference>
<dbReference type="Pfam" id="PF01678">
    <property type="entry name" value="DAP_epimerase"/>
    <property type="match status" value="2"/>
</dbReference>
<dbReference type="SUPFAM" id="SSF54506">
    <property type="entry name" value="Diaminopimelate epimerase-like"/>
    <property type="match status" value="1"/>
</dbReference>
<dbReference type="PROSITE" id="PS01326">
    <property type="entry name" value="DAP_EPIMERASE"/>
    <property type="match status" value="1"/>
</dbReference>